<dbReference type="EC" id="6.1.1.21" evidence="1"/>
<dbReference type="EMBL" id="CP001185">
    <property type="protein sequence ID" value="ACJ75569.1"/>
    <property type="molecule type" value="Genomic_DNA"/>
</dbReference>
<dbReference type="RefSeq" id="WP_012580009.1">
    <property type="nucleotide sequence ID" value="NC_011653.1"/>
</dbReference>
<dbReference type="SMR" id="B7IHK5"/>
<dbReference type="STRING" id="484019.THA_1116"/>
<dbReference type="KEGG" id="taf:THA_1116"/>
<dbReference type="eggNOG" id="COG0124">
    <property type="taxonomic scope" value="Bacteria"/>
</dbReference>
<dbReference type="HOGENOM" id="CLU_025113_1_1_0"/>
<dbReference type="OrthoDB" id="9800814at2"/>
<dbReference type="Proteomes" id="UP000002453">
    <property type="component" value="Chromosome"/>
</dbReference>
<dbReference type="GO" id="GO:0005737">
    <property type="term" value="C:cytoplasm"/>
    <property type="evidence" value="ECO:0007669"/>
    <property type="project" value="UniProtKB-SubCell"/>
</dbReference>
<dbReference type="GO" id="GO:0005524">
    <property type="term" value="F:ATP binding"/>
    <property type="evidence" value="ECO:0007669"/>
    <property type="project" value="UniProtKB-UniRule"/>
</dbReference>
<dbReference type="GO" id="GO:0004821">
    <property type="term" value="F:histidine-tRNA ligase activity"/>
    <property type="evidence" value="ECO:0007669"/>
    <property type="project" value="UniProtKB-UniRule"/>
</dbReference>
<dbReference type="GO" id="GO:0006427">
    <property type="term" value="P:histidyl-tRNA aminoacylation"/>
    <property type="evidence" value="ECO:0007669"/>
    <property type="project" value="UniProtKB-UniRule"/>
</dbReference>
<dbReference type="CDD" id="cd00773">
    <property type="entry name" value="HisRS-like_core"/>
    <property type="match status" value="1"/>
</dbReference>
<dbReference type="CDD" id="cd00859">
    <property type="entry name" value="HisRS_anticodon"/>
    <property type="match status" value="1"/>
</dbReference>
<dbReference type="FunFam" id="3.30.930.10:FF:000005">
    <property type="entry name" value="Histidine--tRNA ligase"/>
    <property type="match status" value="1"/>
</dbReference>
<dbReference type="Gene3D" id="3.40.50.800">
    <property type="entry name" value="Anticodon-binding domain"/>
    <property type="match status" value="1"/>
</dbReference>
<dbReference type="Gene3D" id="3.30.930.10">
    <property type="entry name" value="Bira Bifunctional Protein, Domain 2"/>
    <property type="match status" value="1"/>
</dbReference>
<dbReference type="HAMAP" id="MF_00127">
    <property type="entry name" value="His_tRNA_synth"/>
    <property type="match status" value="1"/>
</dbReference>
<dbReference type="InterPro" id="IPR006195">
    <property type="entry name" value="aa-tRNA-synth_II"/>
</dbReference>
<dbReference type="InterPro" id="IPR045864">
    <property type="entry name" value="aa-tRNA-synth_II/BPL/LPL"/>
</dbReference>
<dbReference type="InterPro" id="IPR004154">
    <property type="entry name" value="Anticodon-bd"/>
</dbReference>
<dbReference type="InterPro" id="IPR036621">
    <property type="entry name" value="Anticodon-bd_dom_sf"/>
</dbReference>
<dbReference type="InterPro" id="IPR015807">
    <property type="entry name" value="His-tRNA-ligase"/>
</dbReference>
<dbReference type="InterPro" id="IPR041715">
    <property type="entry name" value="HisRS-like_core"/>
</dbReference>
<dbReference type="InterPro" id="IPR004516">
    <property type="entry name" value="HisRS/HisZ"/>
</dbReference>
<dbReference type="InterPro" id="IPR033656">
    <property type="entry name" value="HisRS_anticodon"/>
</dbReference>
<dbReference type="NCBIfam" id="TIGR00442">
    <property type="entry name" value="hisS"/>
    <property type="match status" value="1"/>
</dbReference>
<dbReference type="PANTHER" id="PTHR43707:SF1">
    <property type="entry name" value="HISTIDINE--TRNA LIGASE, MITOCHONDRIAL-RELATED"/>
    <property type="match status" value="1"/>
</dbReference>
<dbReference type="PANTHER" id="PTHR43707">
    <property type="entry name" value="HISTIDYL-TRNA SYNTHETASE"/>
    <property type="match status" value="1"/>
</dbReference>
<dbReference type="Pfam" id="PF03129">
    <property type="entry name" value="HGTP_anticodon"/>
    <property type="match status" value="1"/>
</dbReference>
<dbReference type="Pfam" id="PF13393">
    <property type="entry name" value="tRNA-synt_His"/>
    <property type="match status" value="1"/>
</dbReference>
<dbReference type="PIRSF" id="PIRSF001549">
    <property type="entry name" value="His-tRNA_synth"/>
    <property type="match status" value="1"/>
</dbReference>
<dbReference type="SUPFAM" id="SSF52954">
    <property type="entry name" value="Class II aaRS ABD-related"/>
    <property type="match status" value="1"/>
</dbReference>
<dbReference type="SUPFAM" id="SSF55681">
    <property type="entry name" value="Class II aaRS and biotin synthetases"/>
    <property type="match status" value="1"/>
</dbReference>
<dbReference type="PROSITE" id="PS50862">
    <property type="entry name" value="AA_TRNA_LIGASE_II"/>
    <property type="match status" value="1"/>
</dbReference>
<gene>
    <name evidence="1" type="primary">hisS</name>
    <name type="ordered locus">THA_1116</name>
</gene>
<protein>
    <recommendedName>
        <fullName evidence="1">Histidine--tRNA ligase</fullName>
        <ecNumber evidence="1">6.1.1.21</ecNumber>
    </recommendedName>
    <alternativeName>
        <fullName evidence="1">Histidyl-tRNA synthetase</fullName>
        <shortName evidence="1">HisRS</shortName>
    </alternativeName>
</protein>
<sequence>MYKRIKGTEDIFGDDIKYWYYIENVVKETVRLYGYSEIRTPIFEATELFIRSVGEETDIVQKEMYTFEDKGQRSITLRPEGTAPTIRAFIENSMMATGLPKRLFYIGPMFRYERPQKGRQRQFHQFGVELIGSPSPLADAEAIIVADRVLKNLGLLNYTIKINSIGCDKCRANYKNALKEYYSDKLDYVCDDCKRRYNTNVLRLLDCKVDVEYIKDAPKITDYLCDDCKHHYEETKRLLDNLKIKYVEDPLLVRGLDYYNGVVFEIHHGDLGAQSAVGGGGRYDKLIKELGGSQTPSLGFAMGIERLIIALKNEKIPVEEIKNNEIFVAHLGEQARIEALKIAEDLRDNGISVVFSTMERGLSAQLKHAARLKCKLCVIVGENELERNIVILRNMETGEQIEIERDYVVGTAKEWIEG</sequence>
<feature type="chain" id="PRO_1000199161" description="Histidine--tRNA ligase">
    <location>
        <begin position="1"/>
        <end position="418"/>
    </location>
</feature>
<evidence type="ECO:0000255" key="1">
    <source>
        <dbReference type="HAMAP-Rule" id="MF_00127"/>
    </source>
</evidence>
<accession>B7IHK5</accession>
<proteinExistence type="inferred from homology"/>
<organism>
    <name type="scientific">Thermosipho africanus (strain TCF52B)</name>
    <dbReference type="NCBI Taxonomy" id="484019"/>
    <lineage>
        <taxon>Bacteria</taxon>
        <taxon>Thermotogati</taxon>
        <taxon>Thermotogota</taxon>
        <taxon>Thermotogae</taxon>
        <taxon>Thermotogales</taxon>
        <taxon>Fervidobacteriaceae</taxon>
        <taxon>Thermosipho</taxon>
    </lineage>
</organism>
<reference key="1">
    <citation type="journal article" date="2009" name="J. Bacteriol.">
        <title>The genome of Thermosipho africanus TCF52B: lateral genetic connections to the Firmicutes and Archaea.</title>
        <authorList>
            <person name="Nesboe C.L."/>
            <person name="Bapteste E."/>
            <person name="Curtis B."/>
            <person name="Dahle H."/>
            <person name="Lopez P."/>
            <person name="Macleod D."/>
            <person name="Dlutek M."/>
            <person name="Bowman S."/>
            <person name="Zhaxybayeva O."/>
            <person name="Birkeland N.-K."/>
            <person name="Doolittle W.F."/>
        </authorList>
    </citation>
    <scope>NUCLEOTIDE SEQUENCE [LARGE SCALE GENOMIC DNA]</scope>
    <source>
        <strain>TCF52B</strain>
    </source>
</reference>
<name>SYH_THEAB</name>
<comment type="catalytic activity">
    <reaction evidence="1">
        <text>tRNA(His) + L-histidine + ATP = L-histidyl-tRNA(His) + AMP + diphosphate + H(+)</text>
        <dbReference type="Rhea" id="RHEA:17313"/>
        <dbReference type="Rhea" id="RHEA-COMP:9665"/>
        <dbReference type="Rhea" id="RHEA-COMP:9689"/>
        <dbReference type="ChEBI" id="CHEBI:15378"/>
        <dbReference type="ChEBI" id="CHEBI:30616"/>
        <dbReference type="ChEBI" id="CHEBI:33019"/>
        <dbReference type="ChEBI" id="CHEBI:57595"/>
        <dbReference type="ChEBI" id="CHEBI:78442"/>
        <dbReference type="ChEBI" id="CHEBI:78527"/>
        <dbReference type="ChEBI" id="CHEBI:456215"/>
        <dbReference type="EC" id="6.1.1.21"/>
    </reaction>
</comment>
<comment type="subunit">
    <text evidence="1">Homodimer.</text>
</comment>
<comment type="subcellular location">
    <subcellularLocation>
        <location evidence="1">Cytoplasm</location>
    </subcellularLocation>
</comment>
<comment type="similarity">
    <text evidence="1">Belongs to the class-II aminoacyl-tRNA synthetase family.</text>
</comment>
<keyword id="KW-0030">Aminoacyl-tRNA synthetase</keyword>
<keyword id="KW-0067">ATP-binding</keyword>
<keyword id="KW-0963">Cytoplasm</keyword>
<keyword id="KW-0436">Ligase</keyword>
<keyword id="KW-0547">Nucleotide-binding</keyword>
<keyword id="KW-0648">Protein biosynthesis</keyword>
<keyword id="KW-1185">Reference proteome</keyword>